<organism>
    <name type="scientific">Clavispora lusitaniae (strain ATCC 42720)</name>
    <name type="common">Yeast</name>
    <name type="synonym">Candida lusitaniae</name>
    <dbReference type="NCBI Taxonomy" id="306902"/>
    <lineage>
        <taxon>Eukaryota</taxon>
        <taxon>Fungi</taxon>
        <taxon>Dikarya</taxon>
        <taxon>Ascomycota</taxon>
        <taxon>Saccharomycotina</taxon>
        <taxon>Pichiomycetes</taxon>
        <taxon>Metschnikowiaceae</taxon>
        <taxon>Clavispora</taxon>
    </lineage>
</organism>
<dbReference type="EMBL" id="CH408082">
    <property type="protein sequence ID" value="EEQ41394.1"/>
    <property type="molecule type" value="Genomic_DNA"/>
</dbReference>
<dbReference type="RefSeq" id="XP_002614744.1">
    <property type="nucleotide sequence ID" value="XM_002614698.1"/>
</dbReference>
<dbReference type="SMR" id="C4YBE4"/>
<dbReference type="FunCoup" id="C4YBE4">
    <property type="interactions" value="54"/>
</dbReference>
<dbReference type="STRING" id="306902.C4YBE4"/>
<dbReference type="GeneID" id="8495102"/>
<dbReference type="KEGG" id="clu:CLUG_05522"/>
<dbReference type="VEuPathDB" id="FungiDB:CLUG_05522"/>
<dbReference type="HOGENOM" id="CLU_045414_0_0_1"/>
<dbReference type="InParanoid" id="C4YBE4"/>
<dbReference type="OrthoDB" id="108684at4891"/>
<dbReference type="Proteomes" id="UP000007703">
    <property type="component" value="Unassembled WGS sequence"/>
</dbReference>
<dbReference type="GO" id="GO:0005634">
    <property type="term" value="C:nucleus"/>
    <property type="evidence" value="ECO:0007669"/>
    <property type="project" value="UniProtKB-SubCell"/>
</dbReference>
<dbReference type="GO" id="GO:0006325">
    <property type="term" value="P:chromatin organization"/>
    <property type="evidence" value="ECO:0007669"/>
    <property type="project" value="UniProtKB-KW"/>
</dbReference>
<dbReference type="Gene3D" id="2.130.10.10">
    <property type="entry name" value="YVTN repeat-like/Quinoprotein amine dehydrogenase"/>
    <property type="match status" value="2"/>
</dbReference>
<dbReference type="InterPro" id="IPR015943">
    <property type="entry name" value="WD40/YVTN_repeat-like_dom_sf"/>
</dbReference>
<dbReference type="InterPro" id="IPR036322">
    <property type="entry name" value="WD40_repeat_dom_sf"/>
</dbReference>
<dbReference type="PANTHER" id="PTHR19854:SF1">
    <property type="entry name" value="GUANINE NUCLEOTIDE-BINDING PROTEIN SUBUNIT BETA-LIKE PROTEIN 1"/>
    <property type="match status" value="1"/>
</dbReference>
<dbReference type="PANTHER" id="PTHR19854">
    <property type="entry name" value="TRANSDUCIN BETA-LIKE 3"/>
    <property type="match status" value="1"/>
</dbReference>
<dbReference type="SUPFAM" id="SSF50978">
    <property type="entry name" value="WD40 repeat-like"/>
    <property type="match status" value="1"/>
</dbReference>
<dbReference type="PROSITE" id="PS50294">
    <property type="entry name" value="WD_REPEATS_REGION"/>
    <property type="match status" value="1"/>
</dbReference>
<name>ASA1_CLAL4</name>
<protein>
    <recommendedName>
        <fullName>ASTRA-associated protein 1</fullName>
    </recommendedName>
</protein>
<evidence type="ECO:0000250" key="1"/>
<evidence type="ECO:0000305" key="2"/>
<reference key="1">
    <citation type="journal article" date="2009" name="Nature">
        <title>Evolution of pathogenicity and sexual reproduction in eight Candida genomes.</title>
        <authorList>
            <person name="Butler G."/>
            <person name="Rasmussen M.D."/>
            <person name="Lin M.F."/>
            <person name="Santos M.A.S."/>
            <person name="Sakthikumar S."/>
            <person name="Munro C.A."/>
            <person name="Rheinbay E."/>
            <person name="Grabherr M."/>
            <person name="Forche A."/>
            <person name="Reedy J.L."/>
            <person name="Agrafioti I."/>
            <person name="Arnaud M.B."/>
            <person name="Bates S."/>
            <person name="Brown A.J.P."/>
            <person name="Brunke S."/>
            <person name="Costanzo M.C."/>
            <person name="Fitzpatrick D.A."/>
            <person name="de Groot P.W.J."/>
            <person name="Harris D."/>
            <person name="Hoyer L.L."/>
            <person name="Hube B."/>
            <person name="Klis F.M."/>
            <person name="Kodira C."/>
            <person name="Lennard N."/>
            <person name="Logue M.E."/>
            <person name="Martin R."/>
            <person name="Neiman A.M."/>
            <person name="Nikolaou E."/>
            <person name="Quail M.A."/>
            <person name="Quinn J."/>
            <person name="Santos M.C."/>
            <person name="Schmitzberger F.F."/>
            <person name="Sherlock G."/>
            <person name="Shah P."/>
            <person name="Silverstein K.A.T."/>
            <person name="Skrzypek M.S."/>
            <person name="Soll D."/>
            <person name="Staggs R."/>
            <person name="Stansfield I."/>
            <person name="Stumpf M.P.H."/>
            <person name="Sudbery P.E."/>
            <person name="Srikantha T."/>
            <person name="Zeng Q."/>
            <person name="Berman J."/>
            <person name="Berriman M."/>
            <person name="Heitman J."/>
            <person name="Gow N.A.R."/>
            <person name="Lorenz M.C."/>
            <person name="Birren B.W."/>
            <person name="Kellis M."/>
            <person name="Cuomo C.A."/>
        </authorList>
    </citation>
    <scope>NUCLEOTIDE SEQUENCE [LARGE SCALE GENOMIC DNA]</scope>
    <source>
        <strain>ATCC 42720</strain>
    </source>
</reference>
<gene>
    <name type="primary">ASA1</name>
    <name type="ORF">CLUG_05522</name>
</gene>
<feature type="chain" id="PRO_0000402209" description="ASTRA-associated protein 1">
    <location>
        <begin position="1"/>
        <end position="360"/>
    </location>
</feature>
<feature type="repeat" description="WD 1">
    <location>
        <begin position="9"/>
        <end position="46"/>
    </location>
</feature>
<feature type="repeat" description="WD 2">
    <location>
        <begin position="49"/>
        <end position="86"/>
    </location>
</feature>
<feature type="repeat" description="WD 3">
    <location>
        <begin position="167"/>
        <end position="205"/>
    </location>
</feature>
<feature type="repeat" description="WD 4">
    <location>
        <begin position="317"/>
        <end position="357"/>
    </location>
</feature>
<keyword id="KW-0156">Chromatin regulator</keyword>
<keyword id="KW-0539">Nucleus</keyword>
<keyword id="KW-1185">Reference proteome</keyword>
<keyword id="KW-0677">Repeat</keyword>
<keyword id="KW-0853">WD repeat</keyword>
<proteinExistence type="inferred from homology"/>
<sequence length="360" mass="39342">MEKMFSLRAHAAPVSGFCPWENQLVSADRSGTLIVWNLSTRRPAARFRAHEGQVLSMQPTRFGLLTHGRDSAVRIWPPGAAENSKGGDPHPIFEMPVNALNFCNVAYIDGADGTALLATPASVDSDCFDVYRLSPDFSLARAVENQAPKQEQRGADQIEEIGAPPGRGEGIIMRLAWAAPDLLYVGYESGALASFSLSPEGCRMLWLARAHSPHPVLSLALEGARVYSGSAAKTLLVHEPPHEEAVAKHNLGHYGVQCFEILPHLYLAGFWDGSVAGFSRDWQQLFSLERPHEQIEAPESPSRKSLCLFVWSAPAAPEQSRRDRLRSRRAAGRLLFVGHADGLIVAYAIDESSENGLLES</sequence>
<accession>C4YBE4</accession>
<comment type="function">
    <text evidence="1">Component of the ASTRA complex involved in chromatin remodeling.</text>
</comment>
<comment type="subunit">
    <text evidence="1">Component of the ASTRA chromatin remodeling machinery complex.</text>
</comment>
<comment type="subcellular location">
    <subcellularLocation>
        <location evidence="1">Nucleus</location>
    </subcellularLocation>
</comment>
<comment type="similarity">
    <text evidence="2">Belongs to the WD repeat ASA1 family.</text>
</comment>